<geneLocation type="plasmid">
    <name>2-micron</name>
</geneLocation>
<gene>
    <name type="primary">FLP1</name>
    <name type="ordered locus">R0010W</name>
</gene>
<organism>
    <name type="scientific">Saccharomyces cerevisiae (strain ATCC 204508 / S288c)</name>
    <name type="common">Baker's yeast</name>
    <dbReference type="NCBI Taxonomy" id="559292"/>
    <lineage>
        <taxon>Eukaryota</taxon>
        <taxon>Fungi</taxon>
        <taxon>Dikarya</taxon>
        <taxon>Ascomycota</taxon>
        <taxon>Saccharomycotina</taxon>
        <taxon>Saccharomycetes</taxon>
        <taxon>Saccharomycetales</taxon>
        <taxon>Saccharomycetaceae</taxon>
        <taxon>Saccharomyces</taxon>
    </lineage>
</organism>
<accession>P03870</accession>
<sequence>MPQFGILCKTPPKVLVRQFVERFERPSGEKIALCAAELTYLCWMITHNGTAIKRATFMSYNTIISNSLSFDIVNKSLQFKYKTQKATILEASLKKLIPAWEFTIIPYYGQKHQSDITDIVSSLQLQFESSEEADKGNSHSKKMLKALLSEGESIWEITEKILNSFEYTSRFTKTKTLYQFLFLATFINCGRFSDIKNVDPKSFKLVQNKYLGVIIQCLVTETKTSVSRHIYFFSARGRIDPLVYLDEFLRNSEPVLKRVNRTGNSSSNKQEYQLLKDNLVRSYNKALKKNAPYSIFAIKNGPKSHIGRHLMTSFLSMKGLTELTNVVGNWSDKRASAVARTTYTHQITAIPDHYFALVSRYYAYDPISKEMIALKDETNPIEEWQHIEQLKGSAEGSIRYPAWNGIISQEVLDYLSSYINRRI</sequence>
<proteinExistence type="evidence at protein level"/>
<keyword id="KW-0002">3D-structure</keyword>
<keyword id="KW-0903">Direct protein sequencing</keyword>
<keyword id="KW-0229">DNA integration</keyword>
<keyword id="KW-0233">DNA recombination</keyword>
<keyword id="KW-0238">DNA-binding</keyword>
<keyword id="KW-0614">Plasmid</keyword>
<keyword id="KW-1185">Reference proteome</keyword>
<comment type="function">
    <text evidence="3 5 9">Part of the plasmid amplification system, which corrects any decrease in copy number caused by a rare missegregation event. Catalyzes the recombination between the large inverted repetitions of the 2-micron plasmid during plasmid replication. This recombination event changes the direction of one of the two replication forks in the bidirectionally replicating molecule, effectively resulting in multiple rounds of replication from a single initiation event. Binds specifically to the FLP recognition target (FRT) site where it induces DNA to bend. Three types of bend exist. Type I is approximately 60 degrees and results from 1 FLP molecule binding to 1 symmetry element. Type II is &gt;144 degrees and results from FLP molecules binding to symmetry elements a and b. Type III is approximately 65 degrees and results from FLP molecules binding to symmetry elements b and c.</text>
</comment>
<comment type="subunit">
    <text evidence="2">Homotetramer.</text>
</comment>
<comment type="induction">
    <text evidence="6">Repressed by the negative regulatory complex REP1-REP2.</text>
</comment>
<comment type="miscellaneous">
    <text>The plasmid 2-micron circle is a extrachromosomal element that resides in the nucleus and propagates itself stably in host cell populations. It provides no obvious advantage to the host but imposes no significant disadvantage either at its steady-state copy number of 40-60 molecules/cell.</text>
</comment>
<comment type="similarity">
    <text evidence="10">Belongs to the 'phage' integrase family.</text>
</comment>
<evidence type="ECO:0000255" key="1">
    <source>
        <dbReference type="PROSITE-ProRule" id="PRU01247"/>
    </source>
</evidence>
<evidence type="ECO:0000269" key="2">
    <source>
    </source>
</evidence>
<evidence type="ECO:0000269" key="3">
    <source>
    </source>
</evidence>
<evidence type="ECO:0000269" key="4">
    <source>
    </source>
</evidence>
<evidence type="ECO:0000269" key="5">
    <source>
    </source>
</evidence>
<evidence type="ECO:0000269" key="6">
    <source>
    </source>
</evidence>
<evidence type="ECO:0000269" key="7">
    <source>
    </source>
</evidence>
<evidence type="ECO:0000269" key="8">
    <source>
    </source>
</evidence>
<evidence type="ECO:0000269" key="9">
    <source>
    </source>
</evidence>
<evidence type="ECO:0000305" key="10"/>
<evidence type="ECO:0007829" key="11">
    <source>
        <dbReference type="PDB" id="1FLO"/>
    </source>
</evidence>
<evidence type="ECO:0007829" key="12">
    <source>
        <dbReference type="PDB" id="1M6X"/>
    </source>
</evidence>
<evidence type="ECO:0007829" key="13">
    <source>
        <dbReference type="PDB" id="1P4E"/>
    </source>
</evidence>
<feature type="chain" id="PRO_0000197567" description="Site-specific recombinase Flp">
    <location>
        <begin position="1"/>
        <end position="423"/>
    </location>
</feature>
<feature type="domain" description="Tyr recombinase Flp-type" evidence="1">
    <location>
        <begin position="136"/>
        <end position="422"/>
    </location>
</feature>
<feature type="active site" description="O-(3'-phospho-DNA)-tyrosine intermediate" evidence="1 4">
    <location>
        <position position="343"/>
    </location>
</feature>
<feature type="mutagenesis site" description="Inactive and weakened DNA binding." evidence="7">
    <original>H</original>
    <variation>L</variation>
    <variation>P</variation>
    <location>
        <position position="305"/>
    </location>
</feature>
<feature type="mutagenesis site" description="Reduced activity." evidence="7">
    <original>H</original>
    <variation>Q</variation>
    <location>
        <position position="305"/>
    </location>
</feature>
<feature type="mutagenesis site" description="Inactive and weakened DNA binding." evidence="7">
    <original>R</original>
    <variation>G</variation>
    <location>
        <position position="308"/>
    </location>
</feature>
<feature type="mutagenesis site" description="No strand cleavage or recombination." evidence="8">
    <original>Y</original>
    <variation>F</variation>
    <variation>S</variation>
    <location>
        <position position="343"/>
    </location>
</feature>
<feature type="sequence conflict" description="In Ref. 2; AA sequence and 3; AA sequence." evidence="10" ref="2 3">
    <original>G</original>
    <variation>D</variation>
    <location>
        <position position="5"/>
    </location>
</feature>
<feature type="helix" evidence="11">
    <location>
        <begin position="3"/>
        <end position="9"/>
    </location>
</feature>
<feature type="helix" evidence="11">
    <location>
        <begin position="12"/>
        <end position="24"/>
    </location>
</feature>
<feature type="helix" evidence="11">
    <location>
        <begin position="28"/>
        <end position="31"/>
    </location>
</feature>
<feature type="helix" evidence="11">
    <location>
        <begin position="32"/>
        <end position="34"/>
    </location>
</feature>
<feature type="helix" evidence="11">
    <location>
        <begin position="35"/>
        <end position="46"/>
    </location>
</feature>
<feature type="turn" evidence="11">
    <location>
        <begin position="47"/>
        <end position="49"/>
    </location>
</feature>
<feature type="helix" evidence="11">
    <location>
        <begin position="54"/>
        <end position="65"/>
    </location>
</feature>
<feature type="strand" evidence="11">
    <location>
        <begin position="69"/>
        <end position="71"/>
    </location>
</feature>
<feature type="turn" evidence="11">
    <location>
        <begin position="72"/>
        <end position="75"/>
    </location>
</feature>
<feature type="strand" evidence="11">
    <location>
        <begin position="76"/>
        <end position="80"/>
    </location>
</feature>
<feature type="helix" evidence="11">
    <location>
        <begin position="86"/>
        <end position="96"/>
    </location>
</feature>
<feature type="strand" evidence="11">
    <location>
        <begin position="101"/>
        <end position="105"/>
    </location>
</feature>
<feature type="helix" evidence="11">
    <location>
        <begin position="116"/>
        <end position="128"/>
    </location>
</feature>
<feature type="helix" evidence="11">
    <location>
        <begin position="138"/>
        <end position="149"/>
    </location>
</feature>
<feature type="strand" evidence="12">
    <location>
        <begin position="150"/>
        <end position="152"/>
    </location>
</feature>
<feature type="helix" evidence="11">
    <location>
        <begin position="154"/>
        <end position="163"/>
    </location>
</feature>
<feature type="turn" evidence="11">
    <location>
        <begin position="164"/>
        <end position="168"/>
    </location>
</feature>
<feature type="helix" evidence="11">
    <location>
        <begin position="172"/>
        <end position="188"/>
    </location>
</feature>
<feature type="helix" evidence="11">
    <location>
        <begin position="192"/>
        <end position="196"/>
    </location>
</feature>
<feature type="strand" evidence="11">
    <location>
        <begin position="199"/>
        <end position="206"/>
    </location>
</feature>
<feature type="turn" evidence="11">
    <location>
        <begin position="209"/>
        <end position="211"/>
    </location>
</feature>
<feature type="strand" evidence="11">
    <location>
        <begin position="214"/>
        <end position="219"/>
    </location>
</feature>
<feature type="strand" evidence="11">
    <location>
        <begin position="228"/>
        <end position="232"/>
    </location>
</feature>
<feature type="strand" evidence="11">
    <location>
        <begin position="236"/>
        <end position="238"/>
    </location>
</feature>
<feature type="helix" evidence="11">
    <location>
        <begin position="241"/>
        <end position="251"/>
    </location>
</feature>
<feature type="strand" evidence="13">
    <location>
        <begin position="267"/>
        <end position="269"/>
    </location>
</feature>
<feature type="strand" evidence="11">
    <location>
        <begin position="272"/>
        <end position="275"/>
    </location>
</feature>
<feature type="helix" evidence="11">
    <location>
        <begin position="279"/>
        <end position="290"/>
    </location>
</feature>
<feature type="helix" evidence="11">
    <location>
        <begin position="294"/>
        <end position="297"/>
    </location>
</feature>
<feature type="helix" evidence="11">
    <location>
        <begin position="306"/>
        <end position="317"/>
    </location>
</feature>
<feature type="helix" evidence="11">
    <location>
        <begin position="324"/>
        <end position="328"/>
    </location>
</feature>
<feature type="helix" evidence="11">
    <location>
        <begin position="337"/>
        <end position="340"/>
    </location>
</feature>
<feature type="turn" evidence="13">
    <location>
        <begin position="341"/>
        <end position="343"/>
    </location>
</feature>
<feature type="helix" evidence="11">
    <location>
        <begin position="352"/>
        <end position="358"/>
    </location>
</feature>
<feature type="strand" evidence="11">
    <location>
        <begin position="361"/>
        <end position="365"/>
    </location>
</feature>
<feature type="turn" evidence="11">
    <location>
        <begin position="366"/>
        <end position="369"/>
    </location>
</feature>
<feature type="strand" evidence="11">
    <location>
        <begin position="370"/>
        <end position="373"/>
    </location>
</feature>
<feature type="helix" evidence="11">
    <location>
        <begin position="380"/>
        <end position="389"/>
    </location>
</feature>
<feature type="helix" evidence="11">
    <location>
        <begin position="395"/>
        <end position="399"/>
    </location>
</feature>
<feature type="helix" evidence="11">
    <location>
        <begin position="401"/>
        <end position="403"/>
    </location>
</feature>
<feature type="turn" evidence="13">
    <location>
        <begin position="404"/>
        <end position="406"/>
    </location>
</feature>
<feature type="helix" evidence="11">
    <location>
        <begin position="409"/>
        <end position="420"/>
    </location>
</feature>
<name>FLP_YEAST</name>
<protein>
    <recommendedName>
        <fullName>Site-specific recombinase Flp</fullName>
        <shortName>FLP</shortName>
    </recommendedName>
    <alternativeName>
        <fullName>Protein Able</fullName>
    </alternativeName>
</protein>
<dbReference type="EMBL" id="J01347">
    <property type="protein sequence ID" value="AAB59340.1"/>
    <property type="molecule type" value="Genomic_DNA"/>
</dbReference>
<dbReference type="PIR" id="A04502">
    <property type="entry name" value="PDBYA"/>
</dbReference>
<dbReference type="PDB" id="1FLO">
    <property type="method" value="X-ray"/>
    <property type="resolution" value="2.65 A"/>
    <property type="chains" value="A/B/C/D=2-423"/>
</dbReference>
<dbReference type="PDB" id="1M6X">
    <property type="method" value="X-ray"/>
    <property type="resolution" value="2.80 A"/>
    <property type="chains" value="A/B/C/D=1-423"/>
</dbReference>
<dbReference type="PDB" id="1P4E">
    <property type="method" value="X-ray"/>
    <property type="resolution" value="2.70 A"/>
    <property type="chains" value="A/B=2-423, C/D=2-422"/>
</dbReference>
<dbReference type="PDBsum" id="1FLO"/>
<dbReference type="PDBsum" id="1M6X"/>
<dbReference type="PDBsum" id="1P4E"/>
<dbReference type="SMR" id="P03870"/>
<dbReference type="FunCoup" id="P03870">
    <property type="interactions" value="1"/>
</dbReference>
<dbReference type="iPTMnet" id="P03870"/>
<dbReference type="PeptideAtlas" id="P03870"/>
<dbReference type="AGR" id="SGD:S000029654"/>
<dbReference type="SGD" id="S000029654">
    <property type="gene designation" value="FLP1"/>
</dbReference>
<dbReference type="InParanoid" id="P03870"/>
<dbReference type="EvolutionaryTrace" id="P03870"/>
<dbReference type="PRO" id="PR:P03870"/>
<dbReference type="Proteomes" id="UP000002311">
    <property type="component" value="Plasmid 2-micron"/>
</dbReference>
<dbReference type="RNAct" id="P03870">
    <property type="molecule type" value="protein"/>
</dbReference>
<dbReference type="GO" id="GO:0008301">
    <property type="term" value="F:DNA binding, bending"/>
    <property type="evidence" value="ECO:0000315"/>
    <property type="project" value="SGD"/>
</dbReference>
<dbReference type="GO" id="GO:0003690">
    <property type="term" value="F:double-stranded DNA binding"/>
    <property type="evidence" value="ECO:0000314"/>
    <property type="project" value="SGD"/>
</dbReference>
<dbReference type="GO" id="GO:0003697">
    <property type="term" value="F:single-stranded DNA binding"/>
    <property type="evidence" value="ECO:0000314"/>
    <property type="project" value="SGD"/>
</dbReference>
<dbReference type="GO" id="GO:0009009">
    <property type="term" value="F:site-specific recombinase activity"/>
    <property type="evidence" value="ECO:0000314"/>
    <property type="project" value="SGD"/>
</dbReference>
<dbReference type="GO" id="GO:0042150">
    <property type="term" value="P:plasmid recombination"/>
    <property type="evidence" value="ECO:0000314"/>
    <property type="project" value="SGD"/>
</dbReference>
<dbReference type="CDD" id="cd00217">
    <property type="entry name" value="INT_Flp_C"/>
    <property type="match status" value="1"/>
</dbReference>
<dbReference type="Gene3D" id="3.30.300.80">
    <property type="entry name" value="FLP Recombinase, lambda integrase-like, N-terminal domain (domain 1)"/>
    <property type="match status" value="1"/>
</dbReference>
<dbReference type="Gene3D" id="1.10.443.10">
    <property type="entry name" value="Intergrase catalytic core"/>
    <property type="match status" value="1"/>
</dbReference>
<dbReference type="InterPro" id="IPR011010">
    <property type="entry name" value="DNA_brk_join_enz"/>
</dbReference>
<dbReference type="InterPro" id="IPR013762">
    <property type="entry name" value="Integrase-like_cat_sf"/>
</dbReference>
<dbReference type="InterPro" id="IPR005626">
    <property type="entry name" value="Recombinase_Flp_C"/>
</dbReference>
<dbReference type="InterPro" id="IPR022647">
    <property type="entry name" value="Recombinase_Flp_N"/>
</dbReference>
<dbReference type="Pfam" id="PF05202">
    <property type="entry name" value="Flp_C"/>
    <property type="match status" value="1"/>
</dbReference>
<dbReference type="Pfam" id="PF03930">
    <property type="entry name" value="Flp_N"/>
    <property type="match status" value="1"/>
</dbReference>
<dbReference type="SUPFAM" id="SSF56349">
    <property type="entry name" value="DNA breaking-rejoining enzymes"/>
    <property type="match status" value="1"/>
</dbReference>
<dbReference type="SUPFAM" id="SSF47823">
    <property type="entry name" value="lambda integrase-like, N-terminal domain"/>
    <property type="match status" value="1"/>
</dbReference>
<dbReference type="PROSITE" id="PS51899">
    <property type="entry name" value="TYR_RECOMBINASE_FLP"/>
    <property type="match status" value="1"/>
</dbReference>
<reference key="1">
    <citation type="journal article" date="1980" name="Nature">
        <title>Nucleotide sequence of the yeast plasmid.</title>
        <authorList>
            <person name="Hartley J.L."/>
            <person name="Donelson J.E."/>
        </authorList>
    </citation>
    <scope>NUCLEOTIDE SEQUENCE [GENOMIC DNA]</scope>
    <source>
        <strain>A364A D5</strain>
    </source>
</reference>
<reference key="2">
    <citation type="journal article" date="1985" name="J. Biol. Chem.">
        <title>The FLP protein of the 2-micron plasmid of yeast. Purification of the protein from Escherichia coli cells expressing the cloned FLP gene.</title>
        <authorList>
            <person name="Babineau D."/>
            <person name="Vetter D."/>
            <person name="Andrews B.J."/>
            <person name="Gronostajski R.M."/>
            <person name="Proteau G.A."/>
            <person name="Beatty L.G."/>
            <person name="Sadowski P.D."/>
        </authorList>
    </citation>
    <scope>PROTEIN SEQUENCE OF 1-12</scope>
</reference>
<reference key="3">
    <citation type="journal article" date="1991" name="J. Biol. Chem.">
        <title>Identification of the DNA-binding domain of the FLP recombinase.</title>
        <authorList>
            <person name="Pan H."/>
            <person name="Clary D."/>
            <person name="Sadowski P.D."/>
        </authorList>
    </citation>
    <scope>PROTEIN SEQUENCE OF 1-7; 124-129 AND 148-153</scope>
    <scope>FUNCTION</scope>
</reference>
<reference key="4">
    <citation type="journal article" date="1979" name="Nucleic Acids Res.">
        <title>Sequence of 1019 nucleotides encompassing one of the inverted repeats from the yeast 2 micrometer plasmid.</title>
        <authorList>
            <person name="Hindley J."/>
            <person name="Phear G.A."/>
        </authorList>
    </citation>
    <scope>NUCLEOTIDE SEQUENCE [GENOMIC DNA] OF 250-423</scope>
</reference>
<reference key="5">
    <citation type="journal article" date="1987" name="EMBO J.">
        <title>Antagonistic controls regulate copy number of the yeast 2 micron plasmid.</title>
        <authorList>
            <person name="Murray J.A.H."/>
            <person name="Scarpa M."/>
            <person name="Rossi N."/>
            <person name="Cesareni G."/>
        </authorList>
    </citation>
    <scope>INDUCTION</scope>
</reference>
<reference key="6">
    <citation type="journal article" date="1987" name="Mol. Cell. Biol.">
        <title>Roles of the 2 microns gene products in stable maintenance of the 2 microns plasmid of Saccharomyces cerevisiae.</title>
        <authorList>
            <person name="Reynolds A.E."/>
            <person name="Murray A.W.H."/>
            <person name="Szostak J.W."/>
        </authorList>
    </citation>
    <scope>FUNCTION</scope>
</reference>
<reference key="7">
    <citation type="journal article" date="1987" name="Proc. Natl. Acad. Sci. U.S.A.">
        <title>Mutations in the 2-microns circle site-specific recombinase that abolish recombination without affecting substrate recognition.</title>
        <authorList>
            <person name="Prasad P.V."/>
            <person name="Young L.J."/>
            <person name="Jayaram M."/>
        </authorList>
    </citation>
    <scope>MUTAGENESIS OF TYR-343</scope>
</reference>
<reference key="8">
    <citation type="journal article" date="1988" name="Mol. Cell. Biol.">
        <title>Step-arrest mutants of FLP recombinase: implications for the catalytic mechanism of DNA recombination.</title>
        <authorList>
            <person name="Parsons R.L."/>
            <person name="Prasad P.V."/>
            <person name="Harshey R.M."/>
            <person name="Jayaram M."/>
        </authorList>
    </citation>
    <scope>MUTAGENESIS OF HIS-305 AND ARG-308</scope>
</reference>
<reference key="9">
    <citation type="journal article" date="1990" name="J. Mol. Biol.">
        <title>FLP protein of 2 mu circle plasmid of yeast induces multiple bends in the FLP recognition target site.</title>
        <authorList>
            <person name="Schwartz C.J."/>
            <person name="Sadowski P.D."/>
        </authorList>
    </citation>
    <scope>FUNCTION</scope>
</reference>
<reference key="10">
    <citation type="journal article" date="1990" name="J. Biol. Chem.">
        <title>Identification of the active site tyrosine of Flp recombinase. Possible relevance of its location to the mechanism of recombination.</title>
        <authorList>
            <person name="Evans B.R."/>
            <person name="Chen J.W."/>
            <person name="Parsons R.L."/>
            <person name="Bauer T.K."/>
            <person name="Teplow D.B."/>
            <person name="Jayaram M."/>
        </authorList>
    </citation>
    <scope>ACTIVE SITE</scope>
</reference>
<reference key="11">
    <citation type="journal article" date="2000" name="Mol. Cell">
        <title>Crystal structure of a Flp recombinase-Holliday junction complex: assembly of an active oligomer by helix swapping.</title>
        <authorList>
            <person name="Chen Y."/>
            <person name="Narendra U."/>
            <person name="Iype L.E."/>
            <person name="Cox M.M."/>
            <person name="Rice P.A."/>
        </authorList>
    </citation>
    <scope>X-RAY CRYSTALLOGRAPHY (2.65 ANGSTROMS) IN COMPLEX WITH DNA</scope>
    <scope>SUBUNIT</scope>
</reference>